<name>UBIE_BURMS</name>
<feature type="chain" id="PRO_1000056230" description="Ubiquinone/menaquinone biosynthesis C-methyltransferase UbiE">
    <location>
        <begin position="1"/>
        <end position="243"/>
    </location>
</feature>
<feature type="binding site" evidence="1">
    <location>
        <position position="69"/>
    </location>
    <ligand>
        <name>S-adenosyl-L-methionine</name>
        <dbReference type="ChEBI" id="CHEBI:59789"/>
    </ligand>
</feature>
<feature type="binding site" evidence="1">
    <location>
        <position position="90"/>
    </location>
    <ligand>
        <name>S-adenosyl-L-methionine</name>
        <dbReference type="ChEBI" id="CHEBI:59789"/>
    </ligand>
</feature>
<feature type="binding site" evidence="1">
    <location>
        <begin position="116"/>
        <end position="117"/>
    </location>
    <ligand>
        <name>S-adenosyl-L-methionine</name>
        <dbReference type="ChEBI" id="CHEBI:59789"/>
    </ligand>
</feature>
<dbReference type="EC" id="2.1.1.163" evidence="1"/>
<dbReference type="EC" id="2.1.1.201" evidence="1"/>
<dbReference type="EMBL" id="CP000526">
    <property type="protein sequence ID" value="ABM51277.1"/>
    <property type="molecule type" value="Genomic_DNA"/>
</dbReference>
<dbReference type="RefSeq" id="WP_004189973.1">
    <property type="nucleotide sequence ID" value="NC_008785.1"/>
</dbReference>
<dbReference type="SMR" id="A1V753"/>
<dbReference type="GeneID" id="93059149"/>
<dbReference type="KEGG" id="bmv:BMASAVP1_A2760"/>
<dbReference type="HOGENOM" id="CLU_037990_0_0_4"/>
<dbReference type="UniPathway" id="UPA00079">
    <property type="reaction ID" value="UER00169"/>
</dbReference>
<dbReference type="UniPathway" id="UPA00232"/>
<dbReference type="GO" id="GO:0008425">
    <property type="term" value="F:2-methoxy-6-polyprenyl-1,4-benzoquinol methyltransferase activity"/>
    <property type="evidence" value="ECO:0007669"/>
    <property type="project" value="UniProtKB-UniRule"/>
</dbReference>
<dbReference type="GO" id="GO:0043770">
    <property type="term" value="F:demethylmenaquinone methyltransferase activity"/>
    <property type="evidence" value="ECO:0007669"/>
    <property type="project" value="UniProtKB-UniRule"/>
</dbReference>
<dbReference type="GO" id="GO:0009060">
    <property type="term" value="P:aerobic respiration"/>
    <property type="evidence" value="ECO:0007669"/>
    <property type="project" value="UniProtKB-UniRule"/>
</dbReference>
<dbReference type="GO" id="GO:0009234">
    <property type="term" value="P:menaquinone biosynthetic process"/>
    <property type="evidence" value="ECO:0007669"/>
    <property type="project" value="UniProtKB-UniRule"/>
</dbReference>
<dbReference type="GO" id="GO:0032259">
    <property type="term" value="P:methylation"/>
    <property type="evidence" value="ECO:0007669"/>
    <property type="project" value="UniProtKB-KW"/>
</dbReference>
<dbReference type="CDD" id="cd02440">
    <property type="entry name" value="AdoMet_MTases"/>
    <property type="match status" value="1"/>
</dbReference>
<dbReference type="Gene3D" id="3.40.50.150">
    <property type="entry name" value="Vaccinia Virus protein VP39"/>
    <property type="match status" value="1"/>
</dbReference>
<dbReference type="HAMAP" id="MF_01813">
    <property type="entry name" value="MenG_UbiE_methyltr"/>
    <property type="match status" value="1"/>
</dbReference>
<dbReference type="InterPro" id="IPR029063">
    <property type="entry name" value="SAM-dependent_MTases_sf"/>
</dbReference>
<dbReference type="InterPro" id="IPR004033">
    <property type="entry name" value="UbiE/COQ5_MeTrFase"/>
</dbReference>
<dbReference type="InterPro" id="IPR023576">
    <property type="entry name" value="UbiE/COQ5_MeTrFase_CS"/>
</dbReference>
<dbReference type="NCBIfam" id="TIGR01934">
    <property type="entry name" value="MenG_MenH_UbiE"/>
    <property type="match status" value="1"/>
</dbReference>
<dbReference type="NCBIfam" id="NF001240">
    <property type="entry name" value="PRK00216.1-1"/>
    <property type="match status" value="1"/>
</dbReference>
<dbReference type="NCBIfam" id="NF001244">
    <property type="entry name" value="PRK00216.1-5"/>
    <property type="match status" value="1"/>
</dbReference>
<dbReference type="PANTHER" id="PTHR43591:SF24">
    <property type="entry name" value="2-METHOXY-6-POLYPRENYL-1,4-BENZOQUINOL METHYLASE, MITOCHONDRIAL"/>
    <property type="match status" value="1"/>
</dbReference>
<dbReference type="PANTHER" id="PTHR43591">
    <property type="entry name" value="METHYLTRANSFERASE"/>
    <property type="match status" value="1"/>
</dbReference>
<dbReference type="Pfam" id="PF01209">
    <property type="entry name" value="Ubie_methyltran"/>
    <property type="match status" value="1"/>
</dbReference>
<dbReference type="SUPFAM" id="SSF53335">
    <property type="entry name" value="S-adenosyl-L-methionine-dependent methyltransferases"/>
    <property type="match status" value="1"/>
</dbReference>
<dbReference type="PROSITE" id="PS51608">
    <property type="entry name" value="SAM_MT_UBIE"/>
    <property type="match status" value="1"/>
</dbReference>
<dbReference type="PROSITE" id="PS01183">
    <property type="entry name" value="UBIE_1"/>
    <property type="match status" value="1"/>
</dbReference>
<protein>
    <recommendedName>
        <fullName evidence="1">Ubiquinone/menaquinone biosynthesis C-methyltransferase UbiE</fullName>
        <ecNumber evidence="1">2.1.1.163</ecNumber>
        <ecNumber evidence="1">2.1.1.201</ecNumber>
    </recommendedName>
    <alternativeName>
        <fullName evidence="1">2-methoxy-6-polyprenyl-1,4-benzoquinol methylase</fullName>
    </alternativeName>
    <alternativeName>
        <fullName evidence="1">Demethylmenaquinone methyltransferase</fullName>
    </alternativeName>
</protein>
<comment type="function">
    <text evidence="1">Methyltransferase required for the conversion of demethylmenaquinol (DMKH2) to menaquinol (MKH2) and the conversion of 2-polyprenyl-6-methoxy-1,4-benzoquinol (DDMQH2) to 2-polyprenyl-3-methyl-6-methoxy-1,4-benzoquinol (DMQH2).</text>
</comment>
<comment type="catalytic activity">
    <reaction evidence="1">
        <text>a 2-demethylmenaquinol + S-adenosyl-L-methionine = a menaquinol + S-adenosyl-L-homocysteine + H(+)</text>
        <dbReference type="Rhea" id="RHEA:42640"/>
        <dbReference type="Rhea" id="RHEA-COMP:9539"/>
        <dbReference type="Rhea" id="RHEA-COMP:9563"/>
        <dbReference type="ChEBI" id="CHEBI:15378"/>
        <dbReference type="ChEBI" id="CHEBI:18151"/>
        <dbReference type="ChEBI" id="CHEBI:55437"/>
        <dbReference type="ChEBI" id="CHEBI:57856"/>
        <dbReference type="ChEBI" id="CHEBI:59789"/>
        <dbReference type="EC" id="2.1.1.163"/>
    </reaction>
</comment>
<comment type="catalytic activity">
    <reaction evidence="1">
        <text>a 2-methoxy-6-(all-trans-polyprenyl)benzene-1,4-diol + S-adenosyl-L-methionine = a 5-methoxy-2-methyl-3-(all-trans-polyprenyl)benzene-1,4-diol + S-adenosyl-L-homocysteine + H(+)</text>
        <dbReference type="Rhea" id="RHEA:28286"/>
        <dbReference type="Rhea" id="RHEA-COMP:10858"/>
        <dbReference type="Rhea" id="RHEA-COMP:10859"/>
        <dbReference type="ChEBI" id="CHEBI:15378"/>
        <dbReference type="ChEBI" id="CHEBI:57856"/>
        <dbReference type="ChEBI" id="CHEBI:59789"/>
        <dbReference type="ChEBI" id="CHEBI:84166"/>
        <dbReference type="ChEBI" id="CHEBI:84167"/>
        <dbReference type="EC" id="2.1.1.201"/>
    </reaction>
</comment>
<comment type="pathway">
    <text evidence="1">Quinol/quinone metabolism; menaquinone biosynthesis; menaquinol from 1,4-dihydroxy-2-naphthoate: step 2/2.</text>
</comment>
<comment type="pathway">
    <text evidence="1">Cofactor biosynthesis; ubiquinone biosynthesis.</text>
</comment>
<comment type="similarity">
    <text evidence="1">Belongs to the class I-like SAM-binding methyltransferase superfamily. MenG/UbiE family.</text>
</comment>
<evidence type="ECO:0000255" key="1">
    <source>
        <dbReference type="HAMAP-Rule" id="MF_01813"/>
    </source>
</evidence>
<proteinExistence type="inferred from homology"/>
<keyword id="KW-0474">Menaquinone biosynthesis</keyword>
<keyword id="KW-0489">Methyltransferase</keyword>
<keyword id="KW-0949">S-adenosyl-L-methionine</keyword>
<keyword id="KW-0808">Transferase</keyword>
<keyword id="KW-0831">Ubiquinone biosynthesis</keyword>
<organism>
    <name type="scientific">Burkholderia mallei (strain SAVP1)</name>
    <dbReference type="NCBI Taxonomy" id="320388"/>
    <lineage>
        <taxon>Bacteria</taxon>
        <taxon>Pseudomonadati</taxon>
        <taxon>Pseudomonadota</taxon>
        <taxon>Betaproteobacteria</taxon>
        <taxon>Burkholderiales</taxon>
        <taxon>Burkholderiaceae</taxon>
        <taxon>Burkholderia</taxon>
        <taxon>pseudomallei group</taxon>
    </lineage>
</organism>
<gene>
    <name evidence="1" type="primary">ubiE</name>
    <name type="ordered locus">BMASAVP1_A2760</name>
</gene>
<sequence>MSKTHFGFETVEENEKAKKVAGVFHSVASNYDLMNDLMSAGLHRAWKAFTIAQANVRPGGKVLDIAAGTGDLTKAFAKAAGPTGEVWHTDINESMLRVGRDRLLDKGVVTPSLLCDAEKLPFPDNYFDVVTVAFGLRNMTHKDSALAEMRRVAKPGGRVMVLEFSKVWEPLKKAYDVYSFKVLPWLGDKFAKDADSYRYLAESIRMHPDQETLKTMMEQAGLDAVKYYNLSGGVVALHVGTKY</sequence>
<accession>A1V753</accession>
<reference key="1">
    <citation type="journal article" date="2010" name="Genome Biol. Evol.">
        <title>Continuing evolution of Burkholderia mallei through genome reduction and large-scale rearrangements.</title>
        <authorList>
            <person name="Losada L."/>
            <person name="Ronning C.M."/>
            <person name="DeShazer D."/>
            <person name="Woods D."/>
            <person name="Fedorova N."/>
            <person name="Kim H.S."/>
            <person name="Shabalina S.A."/>
            <person name="Pearson T.R."/>
            <person name="Brinkac L."/>
            <person name="Tan P."/>
            <person name="Nandi T."/>
            <person name="Crabtree J."/>
            <person name="Badger J."/>
            <person name="Beckstrom-Sternberg S."/>
            <person name="Saqib M."/>
            <person name="Schutzer S.E."/>
            <person name="Keim P."/>
            <person name="Nierman W.C."/>
        </authorList>
    </citation>
    <scope>NUCLEOTIDE SEQUENCE [LARGE SCALE GENOMIC DNA]</scope>
    <source>
        <strain>SAVP1</strain>
    </source>
</reference>